<dbReference type="EMBL" id="CH476608">
    <property type="protein sequence ID" value="EAU30006.1"/>
    <property type="molecule type" value="Genomic_DNA"/>
</dbReference>
<dbReference type="RefSeq" id="XP_001218437.1">
    <property type="nucleotide sequence ID" value="XM_001218436.1"/>
</dbReference>
<dbReference type="SMR" id="Q0C919"/>
<dbReference type="STRING" id="341663.Q0C919"/>
<dbReference type="EnsemblFungi" id="EAU30006">
    <property type="protein sequence ID" value="EAU30006"/>
    <property type="gene ID" value="ATEG_09815"/>
</dbReference>
<dbReference type="GeneID" id="4354300"/>
<dbReference type="VEuPathDB" id="FungiDB:ATEG_09815"/>
<dbReference type="eggNOG" id="KOG1757">
    <property type="taxonomic scope" value="Eukaryota"/>
</dbReference>
<dbReference type="HOGENOM" id="CLU_062828_2_1_1"/>
<dbReference type="OMA" id="MNKKGAP"/>
<dbReference type="OrthoDB" id="9421954at2759"/>
<dbReference type="Proteomes" id="UP000007963">
    <property type="component" value="Unassembled WGS sequence"/>
</dbReference>
<dbReference type="GO" id="GO:0000791">
    <property type="term" value="C:euchromatin"/>
    <property type="evidence" value="ECO:0007669"/>
    <property type="project" value="EnsemblFungi"/>
</dbReference>
<dbReference type="GO" id="GO:0000786">
    <property type="term" value="C:nucleosome"/>
    <property type="evidence" value="ECO:0007669"/>
    <property type="project" value="UniProtKB-KW"/>
</dbReference>
<dbReference type="GO" id="GO:0005634">
    <property type="term" value="C:nucleus"/>
    <property type="evidence" value="ECO:0007669"/>
    <property type="project" value="UniProtKB-SubCell"/>
</dbReference>
<dbReference type="GO" id="GO:0031490">
    <property type="term" value="F:chromatin DNA binding"/>
    <property type="evidence" value="ECO:0007669"/>
    <property type="project" value="EnsemblFungi"/>
</dbReference>
<dbReference type="GO" id="GO:0042802">
    <property type="term" value="F:identical protein binding"/>
    <property type="evidence" value="ECO:0007669"/>
    <property type="project" value="EnsemblFungi"/>
</dbReference>
<dbReference type="GO" id="GO:0046982">
    <property type="term" value="F:protein heterodimerization activity"/>
    <property type="evidence" value="ECO:0007669"/>
    <property type="project" value="InterPro"/>
</dbReference>
<dbReference type="GO" id="GO:0000978">
    <property type="term" value="F:RNA polymerase II cis-regulatory region sequence-specific DNA binding"/>
    <property type="evidence" value="ECO:0007669"/>
    <property type="project" value="EnsemblFungi"/>
</dbReference>
<dbReference type="GO" id="GO:0030527">
    <property type="term" value="F:structural constituent of chromatin"/>
    <property type="evidence" value="ECO:0007669"/>
    <property type="project" value="InterPro"/>
</dbReference>
<dbReference type="GO" id="GO:0140898">
    <property type="term" value="P:CENP-A eviction from euchromatin"/>
    <property type="evidence" value="ECO:0007669"/>
    <property type="project" value="EnsemblFungi"/>
</dbReference>
<dbReference type="GO" id="GO:0070481">
    <property type="term" value="P:nuclear-transcribed mRNA catabolic process, non-stop decay"/>
    <property type="evidence" value="ECO:0007669"/>
    <property type="project" value="EnsemblFungi"/>
</dbReference>
<dbReference type="GO" id="GO:0006357">
    <property type="term" value="P:regulation of transcription by RNA polymerase II"/>
    <property type="evidence" value="ECO:0007669"/>
    <property type="project" value="EnsemblFungi"/>
</dbReference>
<dbReference type="GO" id="GO:0030466">
    <property type="term" value="P:silent mating-type cassette heterochromatin formation"/>
    <property type="evidence" value="ECO:0007669"/>
    <property type="project" value="EnsemblFungi"/>
</dbReference>
<dbReference type="GO" id="GO:0006368">
    <property type="term" value="P:transcription elongation by RNA polymerase II"/>
    <property type="evidence" value="ECO:0007669"/>
    <property type="project" value="EnsemblFungi"/>
</dbReference>
<dbReference type="CDD" id="cd00074">
    <property type="entry name" value="HFD_H2A"/>
    <property type="match status" value="1"/>
</dbReference>
<dbReference type="FunFam" id="1.10.20.10:FF:000021">
    <property type="entry name" value="Histone H2A"/>
    <property type="match status" value="1"/>
</dbReference>
<dbReference type="Gene3D" id="1.10.20.10">
    <property type="entry name" value="Histone, subunit A"/>
    <property type="match status" value="1"/>
</dbReference>
<dbReference type="InterPro" id="IPR009072">
    <property type="entry name" value="Histone-fold"/>
</dbReference>
<dbReference type="InterPro" id="IPR002119">
    <property type="entry name" value="Histone_H2A"/>
</dbReference>
<dbReference type="InterPro" id="IPR007125">
    <property type="entry name" value="Histone_H2A/H2B/H3"/>
</dbReference>
<dbReference type="InterPro" id="IPR032454">
    <property type="entry name" value="Histone_H2A_C"/>
</dbReference>
<dbReference type="PANTHER" id="PTHR23430">
    <property type="entry name" value="HISTONE H2A"/>
    <property type="match status" value="1"/>
</dbReference>
<dbReference type="Pfam" id="PF00125">
    <property type="entry name" value="Histone"/>
    <property type="match status" value="1"/>
</dbReference>
<dbReference type="Pfam" id="PF16211">
    <property type="entry name" value="Histone_H2A_C"/>
    <property type="match status" value="1"/>
</dbReference>
<dbReference type="PRINTS" id="PR00620">
    <property type="entry name" value="HISTONEH2A"/>
</dbReference>
<dbReference type="SMART" id="SM00414">
    <property type="entry name" value="H2A"/>
    <property type="match status" value="1"/>
</dbReference>
<dbReference type="SUPFAM" id="SSF47113">
    <property type="entry name" value="Histone-fold"/>
    <property type="match status" value="1"/>
</dbReference>
<reference key="1">
    <citation type="submission" date="2005-09" db="EMBL/GenBank/DDBJ databases">
        <title>Annotation of the Aspergillus terreus NIH2624 genome.</title>
        <authorList>
            <person name="Birren B.W."/>
            <person name="Lander E.S."/>
            <person name="Galagan J.E."/>
            <person name="Nusbaum C."/>
            <person name="Devon K."/>
            <person name="Henn M."/>
            <person name="Ma L.-J."/>
            <person name="Jaffe D.B."/>
            <person name="Butler J."/>
            <person name="Alvarez P."/>
            <person name="Gnerre S."/>
            <person name="Grabherr M."/>
            <person name="Kleber M."/>
            <person name="Mauceli E.W."/>
            <person name="Brockman W."/>
            <person name="Rounsley S."/>
            <person name="Young S.K."/>
            <person name="LaButti K."/>
            <person name="Pushparaj V."/>
            <person name="DeCaprio D."/>
            <person name="Crawford M."/>
            <person name="Koehrsen M."/>
            <person name="Engels R."/>
            <person name="Montgomery P."/>
            <person name="Pearson M."/>
            <person name="Howarth C."/>
            <person name="Larson L."/>
            <person name="Luoma S."/>
            <person name="White J."/>
            <person name="Alvarado L."/>
            <person name="Kodira C.D."/>
            <person name="Zeng Q."/>
            <person name="Oleary S."/>
            <person name="Yandava C."/>
            <person name="Denning D.W."/>
            <person name="Nierman W.C."/>
            <person name="Milne T."/>
            <person name="Madden K."/>
        </authorList>
    </citation>
    <scope>NUCLEOTIDE SEQUENCE [LARGE SCALE GENOMIC DNA]</scope>
    <source>
        <strain>NIH 2624 / FGSC A1156</strain>
    </source>
</reference>
<name>H2AZ_ASPTN</name>
<feature type="chain" id="PRO_0000297720" description="Histone H2A.Z">
    <location>
        <begin position="1"/>
        <end position="138"/>
    </location>
</feature>
<feature type="region of interest" description="Disordered" evidence="2">
    <location>
        <begin position="1"/>
        <end position="36"/>
    </location>
</feature>
<feature type="compositionally biased region" description="Gly residues" evidence="2">
    <location>
        <begin position="1"/>
        <end position="13"/>
    </location>
</feature>
<feature type="modified residue" description="N6-acetyllysine" evidence="1">
    <location>
        <position position="5"/>
    </location>
</feature>
<feature type="modified residue" description="N6-acetyllysine" evidence="1">
    <location>
        <position position="12"/>
    </location>
</feature>
<gene>
    <name type="primary">HTZ1</name>
    <name type="ORF">ATEG_09815</name>
</gene>
<evidence type="ECO:0000250" key="1"/>
<evidence type="ECO:0000256" key="2">
    <source>
        <dbReference type="SAM" id="MobiDB-lite"/>
    </source>
</evidence>
<evidence type="ECO:0000305" key="3"/>
<keyword id="KW-0007">Acetylation</keyword>
<keyword id="KW-0158">Chromosome</keyword>
<keyword id="KW-0238">DNA-binding</keyword>
<keyword id="KW-0544">Nucleosome core</keyword>
<keyword id="KW-0539">Nucleus</keyword>
<keyword id="KW-1185">Reference proteome</keyword>
<proteinExistence type="inferred from homology"/>
<comment type="function">
    <text evidence="1">Variant histone H2A which can replace H2A in some nucleosomes. Nucleosomes wrap and compact DNA into chromatin, limiting DNA accessibility to the cellular machineries which require DNA as a template. Histones thereby play a central role in transcription regulation, DNA repair, DNA replication and chromosomal stability. DNA accessibility is regulated via a complex set of post-translational modifications of histones, also called histone code, and nucleosome remodeling. This variant is enriched at promoters, it may keep them in a repressed state until the appropriate activation signal is received. Near telomeres, it may counteract gene silencing caused by the spread of heterochromatin proteins. Required for the RNA polymerase II and spt15/TBP recruitment to the target genes. Involved in chromosome stability (By similarity).</text>
</comment>
<comment type="subunit">
    <text evidence="1">The nucleosome is a histone octamer containing two molecules each of H2A, H2B, H3 and H4 assembled in one H3-H4 heterotetramer and two H2A-H2B heterodimers. The octamer wraps approximately 147 bp of DNA. H2A or its variant H2A.Z forms a heterodimer with H2B. H2A.Z associates with the vps72/swc2 subunit of the SWR1 chromatin remodeling complex. Also interacts with rbp1/DNA-directed RNA polymerase II largest subunit (By similarity).</text>
</comment>
<comment type="subcellular location">
    <subcellularLocation>
        <location evidence="1">Nucleus</location>
    </subcellularLocation>
    <subcellularLocation>
        <location evidence="1">Chromosome</location>
    </subcellularLocation>
</comment>
<comment type="PTM">
    <text evidence="1">Acetylated once deposited into chromatin.</text>
</comment>
<comment type="similarity">
    <text evidence="3">Belongs to the histone H2A family.</text>
</comment>
<organism>
    <name type="scientific">Aspergillus terreus (strain NIH 2624 / FGSC A1156)</name>
    <dbReference type="NCBI Taxonomy" id="341663"/>
    <lineage>
        <taxon>Eukaryota</taxon>
        <taxon>Fungi</taxon>
        <taxon>Dikarya</taxon>
        <taxon>Ascomycota</taxon>
        <taxon>Pezizomycotina</taxon>
        <taxon>Eurotiomycetes</taxon>
        <taxon>Eurotiomycetidae</taxon>
        <taxon>Eurotiales</taxon>
        <taxon>Aspergillaceae</taxon>
        <taxon>Aspergillus</taxon>
        <taxon>Aspergillus subgen. Circumdati</taxon>
    </lineage>
</organism>
<sequence>MPGGKGKSIGGKAGSKDSAGKTQKSHSAKAGLQFPRGSVKRFLKNNTQNKMRVGAKAAVYVTAVLEYLTAEVLELAGNAAKDLKVKRITPRHLQLAIRGDEELDTLIRATIAFGGVLPRINRALLLKVEQKKKGKSDS</sequence>
<accession>Q0C919</accession>
<protein>
    <recommendedName>
        <fullName>Histone H2A.Z</fullName>
    </recommendedName>
</protein>